<gene>
    <name evidence="1" type="primary">rplI</name>
    <name type="ordered locus">FTW_0970</name>
</gene>
<evidence type="ECO:0000255" key="1">
    <source>
        <dbReference type="HAMAP-Rule" id="MF_00503"/>
    </source>
</evidence>
<evidence type="ECO:0000305" key="2"/>
<accession>A4IY05</accession>
<name>RL9_FRATW</name>
<feature type="chain" id="PRO_1000014782" description="Large ribosomal subunit protein bL9">
    <location>
        <begin position="1"/>
        <end position="151"/>
    </location>
</feature>
<comment type="function">
    <text evidence="1">Binds to the 23S rRNA.</text>
</comment>
<comment type="similarity">
    <text evidence="1">Belongs to the bacterial ribosomal protein bL9 family.</text>
</comment>
<proteinExistence type="inferred from homology"/>
<dbReference type="EMBL" id="CP000608">
    <property type="protein sequence ID" value="ABO46806.1"/>
    <property type="molecule type" value="Genomic_DNA"/>
</dbReference>
<dbReference type="RefSeq" id="WP_003026119.1">
    <property type="nucleotide sequence ID" value="NC_009257.1"/>
</dbReference>
<dbReference type="SMR" id="A4IY05"/>
<dbReference type="KEGG" id="ftw:FTW_0970"/>
<dbReference type="HOGENOM" id="CLU_078938_4_1_6"/>
<dbReference type="GO" id="GO:1990904">
    <property type="term" value="C:ribonucleoprotein complex"/>
    <property type="evidence" value="ECO:0007669"/>
    <property type="project" value="UniProtKB-KW"/>
</dbReference>
<dbReference type="GO" id="GO:0005840">
    <property type="term" value="C:ribosome"/>
    <property type="evidence" value="ECO:0007669"/>
    <property type="project" value="UniProtKB-KW"/>
</dbReference>
<dbReference type="GO" id="GO:0019843">
    <property type="term" value="F:rRNA binding"/>
    <property type="evidence" value="ECO:0007669"/>
    <property type="project" value="UniProtKB-UniRule"/>
</dbReference>
<dbReference type="GO" id="GO:0003735">
    <property type="term" value="F:structural constituent of ribosome"/>
    <property type="evidence" value="ECO:0007669"/>
    <property type="project" value="InterPro"/>
</dbReference>
<dbReference type="GO" id="GO:0006412">
    <property type="term" value="P:translation"/>
    <property type="evidence" value="ECO:0007669"/>
    <property type="project" value="UniProtKB-UniRule"/>
</dbReference>
<dbReference type="Gene3D" id="3.10.430.100">
    <property type="entry name" value="Ribosomal protein L9, C-terminal domain"/>
    <property type="match status" value="1"/>
</dbReference>
<dbReference type="Gene3D" id="3.40.5.10">
    <property type="entry name" value="Ribosomal protein L9, N-terminal domain"/>
    <property type="match status" value="1"/>
</dbReference>
<dbReference type="HAMAP" id="MF_00503">
    <property type="entry name" value="Ribosomal_bL9"/>
    <property type="match status" value="1"/>
</dbReference>
<dbReference type="InterPro" id="IPR000244">
    <property type="entry name" value="Ribosomal_bL9"/>
</dbReference>
<dbReference type="InterPro" id="IPR009027">
    <property type="entry name" value="Ribosomal_bL9/RNase_H1_N"/>
</dbReference>
<dbReference type="InterPro" id="IPR020594">
    <property type="entry name" value="Ribosomal_bL9_bac/chp"/>
</dbReference>
<dbReference type="InterPro" id="IPR020069">
    <property type="entry name" value="Ribosomal_bL9_C"/>
</dbReference>
<dbReference type="InterPro" id="IPR036791">
    <property type="entry name" value="Ribosomal_bL9_C_sf"/>
</dbReference>
<dbReference type="InterPro" id="IPR020070">
    <property type="entry name" value="Ribosomal_bL9_N"/>
</dbReference>
<dbReference type="InterPro" id="IPR036935">
    <property type="entry name" value="Ribosomal_bL9_N_sf"/>
</dbReference>
<dbReference type="NCBIfam" id="TIGR00158">
    <property type="entry name" value="L9"/>
    <property type="match status" value="1"/>
</dbReference>
<dbReference type="PANTHER" id="PTHR21368">
    <property type="entry name" value="50S RIBOSOMAL PROTEIN L9"/>
    <property type="match status" value="1"/>
</dbReference>
<dbReference type="Pfam" id="PF03948">
    <property type="entry name" value="Ribosomal_L9_C"/>
    <property type="match status" value="1"/>
</dbReference>
<dbReference type="Pfam" id="PF01281">
    <property type="entry name" value="Ribosomal_L9_N"/>
    <property type="match status" value="1"/>
</dbReference>
<dbReference type="SUPFAM" id="SSF55658">
    <property type="entry name" value="L9 N-domain-like"/>
    <property type="match status" value="1"/>
</dbReference>
<dbReference type="SUPFAM" id="SSF55653">
    <property type="entry name" value="Ribosomal protein L9 C-domain"/>
    <property type="match status" value="1"/>
</dbReference>
<dbReference type="PROSITE" id="PS00651">
    <property type="entry name" value="RIBOSOMAL_L9"/>
    <property type="match status" value="1"/>
</dbReference>
<sequence>MQVILKEKVENLGVLGDIVNVKPGYARNFLIPFGKAVQATQANIKAFEAQKAELEKAEKARFEAAVAVADAIKDKVYTIAAQAGEGGKLFGSVGTAEVAEAVSNQSGKKIEKSQVRMPEGVIRSIGEFELTVHVYTDVDADIKVNVVAAEA</sequence>
<protein>
    <recommendedName>
        <fullName evidence="1">Large ribosomal subunit protein bL9</fullName>
    </recommendedName>
    <alternativeName>
        <fullName evidence="2">50S ribosomal protein L9</fullName>
    </alternativeName>
</protein>
<reference key="1">
    <citation type="journal article" date="2007" name="PLoS ONE">
        <title>Complete genomic characterization of a pathogenic A.II strain of Francisella tularensis subspecies tularensis.</title>
        <authorList>
            <person name="Beckstrom-Sternberg S.M."/>
            <person name="Auerbach R.K."/>
            <person name="Godbole S."/>
            <person name="Pearson J.V."/>
            <person name="Beckstrom-Sternberg J.S."/>
            <person name="Deng Z."/>
            <person name="Munk C."/>
            <person name="Kubota K."/>
            <person name="Zhou Y."/>
            <person name="Bruce D."/>
            <person name="Noronha J."/>
            <person name="Scheuermann R.H."/>
            <person name="Wang A."/>
            <person name="Wei X."/>
            <person name="Wang J."/>
            <person name="Hao J."/>
            <person name="Wagner D.M."/>
            <person name="Brettin T.S."/>
            <person name="Brown N."/>
            <person name="Gilna P."/>
            <person name="Keim P.S."/>
        </authorList>
    </citation>
    <scope>NUCLEOTIDE SEQUENCE [LARGE SCALE GENOMIC DNA]</scope>
    <source>
        <strain>WY96-3418</strain>
    </source>
</reference>
<organism>
    <name type="scientific">Francisella tularensis subsp. tularensis (strain WY96-3418)</name>
    <dbReference type="NCBI Taxonomy" id="418136"/>
    <lineage>
        <taxon>Bacteria</taxon>
        <taxon>Pseudomonadati</taxon>
        <taxon>Pseudomonadota</taxon>
        <taxon>Gammaproteobacteria</taxon>
        <taxon>Thiotrichales</taxon>
        <taxon>Francisellaceae</taxon>
        <taxon>Francisella</taxon>
    </lineage>
</organism>
<keyword id="KW-0687">Ribonucleoprotein</keyword>
<keyword id="KW-0689">Ribosomal protein</keyword>
<keyword id="KW-0694">RNA-binding</keyword>
<keyword id="KW-0699">rRNA-binding</keyword>